<reference key="1">
    <citation type="journal article" date="2004" name="Nucleic Acids Res.">
        <title>Differential evolution of the Saccharomyces cerevisiae DUP240 paralogs and implication of recombination in phylogeny.</title>
        <authorList>
            <person name="Leh-Louis V."/>
            <person name="Wirth B."/>
            <person name="Despons L."/>
            <person name="Wain-Hobson S."/>
            <person name="Potier S."/>
            <person name="Souciet J.-L."/>
        </authorList>
    </citation>
    <scope>NUCLEOTIDE SEQUENCE [GENOMIC DNA]</scope>
    <scope>VARIANTS THR-34; THR-176; GLY-201; ILE-294; GLU-337; ASN-370 AND LEU-394</scope>
    <source>
        <strain>CBS 5287 / CLIB 219</strain>
        <strain>CLIB 388</strain>
        <strain>CLIB 410</strain>
        <strain>CLIB 413</strain>
        <strain>CLIB 556</strain>
        <strain>CLIB 630</strain>
        <strain>CLIB 95</strain>
        <strain>Diastaticus / ATCC 13007 / CBS 1782 / CLIB 382 / NBRC 1046 / NRRL Y-2416</strain>
        <strain>K1</strain>
        <strain>R12</strain>
        <strain>R13</strain>
        <strain>Sigma 1278B</strain>
        <strain>YIIc12</strain>
        <strain>YIIc17</strain>
    </source>
</reference>
<comment type="function">
    <text evidence="1">Receptor for the peptide pheromone alpha factor, the mating factor of yeast.</text>
</comment>
<comment type="interaction">
    <interactant intactId="EBI-18360">
        <id>P0CI39</id>
    </interactant>
    <interactant intactId="EBI-18232">
        <id>P11972</id>
        <label>SST2</label>
    </interactant>
    <organismsDiffer>true</organismsDiffer>
    <experiments>4</experiments>
</comment>
<comment type="subcellular location">
    <subcellularLocation>
        <location>Membrane</location>
        <topology>Multi-pass membrane protein</topology>
    </subcellularLocation>
</comment>
<comment type="miscellaneous">
    <text evidence="1">N-glycosylation may be involved in the sorting process for misfolded STE2 protein.</text>
</comment>
<comment type="similarity">
    <text evidence="6">Belongs to the G-protein coupled receptor 4 family.</text>
</comment>
<keyword id="KW-0297">G-protein coupled receptor</keyword>
<keyword id="KW-0325">Glycoprotein</keyword>
<keyword id="KW-1017">Isopeptide bond</keyword>
<keyword id="KW-0472">Membrane</keyword>
<keyword id="KW-0589">Pheromone response</keyword>
<keyword id="KW-0597">Phosphoprotein</keyword>
<keyword id="KW-0675">Receptor</keyword>
<keyword id="KW-0807">Transducer</keyword>
<keyword id="KW-0812">Transmembrane</keyword>
<keyword id="KW-1133">Transmembrane helix</keyword>
<keyword id="KW-0832">Ubl conjugation</keyword>
<organism>
    <name type="scientific">Saccharomyces cerevisiae</name>
    <name type="common">Baker's yeast</name>
    <dbReference type="NCBI Taxonomy" id="4932"/>
    <lineage>
        <taxon>Eukaryota</taxon>
        <taxon>Fungi</taxon>
        <taxon>Dikarya</taxon>
        <taxon>Ascomycota</taxon>
        <taxon>Saccharomycotina</taxon>
        <taxon>Saccharomycetes</taxon>
        <taxon>Saccharomycetales</taxon>
        <taxon>Saccharomycetaceae</taxon>
        <taxon>Saccharomyces</taxon>
    </lineage>
</organism>
<sequence length="431" mass="47849">MSDAAPSLSNLFYDPTYNPGQSTINYTSIYGNGSTITFDELQGLVNSTVTQAIMFGVRCGAAALTLIVMWMTSRSRKTPIFIINQVSLFLIILHSALYFKYLLSNYSSVTYALTGFPQFISRGDVHVYGATNIIQVLLVASIETSLVFQIKVIFTGDNFKRIGLMLTSISFTLGIATVTMYFVSAVKGMIVTYNDVSATQDKYFNASTILLASSINFMSFVLVVKLILAIRSRRFLGLKQFDSFHILLIMSCQSLLVPSIIFILAYSLKPNQGTDVLTTVATLLAVLSLPLSSMWATAANNASKTNTITSDFTTSTDRFYPGTLSSFQTDSINNDAKSSLRSRLYDLYPRRKETTSDKHSERTFVSETADDIEKNQFYQLPTPTSSKNTRIGPFADASYKEGEVEPVDMYTPDTAADEEARKFWTEDNNNL</sequence>
<accession>P0CI39</accession>
<accession>P06842</accession>
<accession>Q70D63</accession>
<accession>Q70D65</accession>
<accession>Q70D69</accession>
<accession>Q70D73</accession>
<accession>Q70D74</accession>
<gene>
    <name type="primary">STE2</name>
</gene>
<protein>
    <recommendedName>
        <fullName>Pheromone alpha factor receptor</fullName>
    </recommendedName>
</protein>
<dbReference type="EMBL" id="AJ585737">
    <property type="protein sequence ID" value="CAE52257.1"/>
    <property type="molecule type" value="Genomic_DNA"/>
</dbReference>
<dbReference type="EMBL" id="AJ585738">
    <property type="protein sequence ID" value="CAE52258.1"/>
    <property type="molecule type" value="Genomic_DNA"/>
</dbReference>
<dbReference type="EMBL" id="AJ585739">
    <property type="protein sequence ID" value="CAE52259.1"/>
    <property type="molecule type" value="Genomic_DNA"/>
</dbReference>
<dbReference type="EMBL" id="AJ585740">
    <property type="protein sequence ID" value="CAE52260.1"/>
    <property type="molecule type" value="Genomic_DNA"/>
</dbReference>
<dbReference type="EMBL" id="AJ585741">
    <property type="protein sequence ID" value="CAE52261.1"/>
    <property type="molecule type" value="Genomic_DNA"/>
</dbReference>
<dbReference type="EMBL" id="AJ585742">
    <property type="protein sequence ID" value="CAE52262.1"/>
    <property type="molecule type" value="Genomic_DNA"/>
</dbReference>
<dbReference type="EMBL" id="AJ585743">
    <property type="protein sequence ID" value="CAE52263.1"/>
    <property type="molecule type" value="Genomic_DNA"/>
</dbReference>
<dbReference type="EMBL" id="AJ585744">
    <property type="protein sequence ID" value="CAE52264.1"/>
    <property type="molecule type" value="Genomic_DNA"/>
</dbReference>
<dbReference type="EMBL" id="AJ585745">
    <property type="protein sequence ID" value="CAE52265.1"/>
    <property type="molecule type" value="Genomic_DNA"/>
</dbReference>
<dbReference type="EMBL" id="AJ585746">
    <property type="protein sequence ID" value="CAE52266.1"/>
    <property type="molecule type" value="Genomic_DNA"/>
</dbReference>
<dbReference type="EMBL" id="AJ585747">
    <property type="protein sequence ID" value="CAE52267.1"/>
    <property type="molecule type" value="Genomic_DNA"/>
</dbReference>
<dbReference type="EMBL" id="AJ585748">
    <property type="protein sequence ID" value="CAE52268.1"/>
    <property type="molecule type" value="Genomic_DNA"/>
</dbReference>
<dbReference type="EMBL" id="AJ585749">
    <property type="protein sequence ID" value="CAE52269.1"/>
    <property type="molecule type" value="Genomic_DNA"/>
</dbReference>
<dbReference type="EMBL" id="AJ585750">
    <property type="protein sequence ID" value="CAE52270.1"/>
    <property type="molecule type" value="Genomic_DNA"/>
</dbReference>
<dbReference type="EMBL" id="AJ585751">
    <property type="protein sequence ID" value="CAE52271.1"/>
    <property type="molecule type" value="Genomic_DNA"/>
</dbReference>
<dbReference type="EMBL" id="AJ585752">
    <property type="protein sequence ID" value="CAE52272.1"/>
    <property type="molecule type" value="Genomic_DNA"/>
</dbReference>
<dbReference type="EMBL" id="AJ585753">
    <property type="protein sequence ID" value="CAE52273.1"/>
    <property type="molecule type" value="Genomic_DNA"/>
</dbReference>
<dbReference type="EMBL" id="AJ585754">
    <property type="protein sequence ID" value="CAE52274.1"/>
    <property type="molecule type" value="Genomic_DNA"/>
</dbReference>
<dbReference type="BMRB" id="P0CI39"/>
<dbReference type="EMDB" id="EMD-11720"/>
<dbReference type="EMDB" id="EMD-13880"/>
<dbReference type="EMDB" id="EMD-13882"/>
<dbReference type="EMDB" id="EMD-13886"/>
<dbReference type="EMDB" id="EMD-13887"/>
<dbReference type="SMR" id="P0CI39"/>
<dbReference type="IntAct" id="P0CI39">
    <property type="interactions" value="23"/>
</dbReference>
<dbReference type="MINT" id="P0CI39"/>
<dbReference type="GlyCosmos" id="P0CI39">
    <property type="glycosylation" value="2 sites, No reported glycans"/>
</dbReference>
<dbReference type="KEGG" id="sce:YFL026W"/>
<dbReference type="VEuPathDB" id="FungiDB:YFL026W"/>
<dbReference type="PhylomeDB" id="P0CI39"/>
<dbReference type="GO" id="GO:0038038">
    <property type="term" value="C:G protein-coupled receptor homodimeric complex"/>
    <property type="evidence" value="ECO:0007669"/>
    <property type="project" value="TreeGrafter"/>
</dbReference>
<dbReference type="GO" id="GO:0004932">
    <property type="term" value="F:mating-type factor pheromone receptor activity"/>
    <property type="evidence" value="ECO:0007669"/>
    <property type="project" value="InterPro"/>
</dbReference>
<dbReference type="GO" id="GO:0000750">
    <property type="term" value="P:pheromone-dependent signal transduction involved in conjugation with cellular fusion"/>
    <property type="evidence" value="ECO:0007669"/>
    <property type="project" value="TreeGrafter"/>
</dbReference>
<dbReference type="CDD" id="cd14939">
    <property type="entry name" value="7tmD_STE2"/>
    <property type="match status" value="1"/>
</dbReference>
<dbReference type="Gene3D" id="1.10.287.920">
    <property type="entry name" value="Pheromone alpha factor receptor"/>
    <property type="match status" value="1"/>
</dbReference>
<dbReference type="InterPro" id="IPR000366">
    <property type="entry name" value="GPCR_STE2"/>
</dbReference>
<dbReference type="InterPro" id="IPR027458">
    <property type="entry name" value="STE2_TM1-TM2_sf"/>
</dbReference>
<dbReference type="PANTHER" id="PTHR28009">
    <property type="entry name" value="PHEROMONE ALPHA FACTOR RECEPTOR"/>
    <property type="match status" value="1"/>
</dbReference>
<dbReference type="PANTHER" id="PTHR28009:SF1">
    <property type="entry name" value="PHEROMONE ALPHA FACTOR RECEPTOR"/>
    <property type="match status" value="1"/>
</dbReference>
<dbReference type="Pfam" id="PF02116">
    <property type="entry name" value="STE2"/>
    <property type="match status" value="1"/>
</dbReference>
<dbReference type="PRINTS" id="PR00250">
    <property type="entry name" value="GPCRSTE2"/>
</dbReference>
<feature type="chain" id="PRO_0000402383" description="Pheromone alpha factor receptor">
    <location>
        <begin position="1"/>
        <end position="431"/>
    </location>
</feature>
<feature type="transmembrane region" description="Helical" evidence="3">
    <location>
        <begin position="51"/>
        <end position="73"/>
    </location>
</feature>
<feature type="transmembrane region" description="Helical" evidence="3">
    <location>
        <begin position="80"/>
        <end position="102"/>
    </location>
</feature>
<feature type="transmembrane region" description="Helical" evidence="3">
    <location>
        <begin position="133"/>
        <end position="155"/>
    </location>
</feature>
<feature type="transmembrane region" description="Helical" evidence="3">
    <location>
        <begin position="162"/>
        <end position="184"/>
    </location>
</feature>
<feature type="transmembrane region" description="Helical" evidence="3">
    <location>
        <begin position="209"/>
        <end position="231"/>
    </location>
</feature>
<feature type="transmembrane region" description="Helical" evidence="3">
    <location>
        <begin position="244"/>
        <end position="266"/>
    </location>
</feature>
<feature type="transmembrane region" description="Helical" evidence="3">
    <location>
        <begin position="276"/>
        <end position="298"/>
    </location>
</feature>
<feature type="region of interest" description="Disordered" evidence="4">
    <location>
        <begin position="379"/>
        <end position="406"/>
    </location>
</feature>
<feature type="compositionally biased region" description="Polar residues" evidence="4">
    <location>
        <begin position="379"/>
        <end position="389"/>
    </location>
</feature>
<feature type="modified residue" description="Phosphoserine" evidence="2">
    <location>
        <position position="310"/>
    </location>
</feature>
<feature type="modified residue" description="Phosphoserine" evidence="2">
    <location>
        <position position="315"/>
    </location>
</feature>
<feature type="modified residue" description="Phosphothreonine" evidence="2">
    <location>
        <position position="329"/>
    </location>
</feature>
<feature type="modified residue" description="Phosphoserine" evidence="2">
    <location>
        <position position="331"/>
    </location>
</feature>
<feature type="modified residue" description="Phosphoserine" evidence="2">
    <location>
        <position position="360"/>
    </location>
</feature>
<feature type="modified residue" description="Phosphothreonine" evidence="2">
    <location>
        <position position="363"/>
    </location>
</feature>
<feature type="modified residue" description="Phosphoserine" evidence="2">
    <location>
        <position position="366"/>
    </location>
</feature>
<feature type="modified residue" description="Phosphothreonine" evidence="2">
    <location>
        <position position="382"/>
    </location>
</feature>
<feature type="modified residue" description="Phosphoserine" evidence="2">
    <location>
        <position position="385"/>
    </location>
</feature>
<feature type="modified residue" description="Phosphoserine" evidence="2">
    <location>
        <position position="386"/>
    </location>
</feature>
<feature type="modified residue" description="Phosphothreonine" evidence="2">
    <location>
        <position position="411"/>
    </location>
</feature>
<feature type="modified residue" description="Phosphothreonine" evidence="2">
    <location>
        <position position="414"/>
    </location>
</feature>
<feature type="glycosylation site" description="N-linked (GlcNAc...) asparagine" evidence="1">
    <location>
        <position position="25"/>
    </location>
</feature>
<feature type="glycosylation site" description="N-linked (GlcNAc...) asparagine" evidence="1">
    <location>
        <position position="32"/>
    </location>
</feature>
<feature type="cross-link" description="Glycyl lysine isopeptide (Lys-Gly) (interchain with G-Cter in ubiquitin)" evidence="2">
    <location>
        <position position="374"/>
    </location>
</feature>
<feature type="cross-link" description="Glycyl lysine isopeptide (Lys-Gly) (interchain with G-Cter in ubiquitin)" evidence="2">
    <location>
        <position position="400"/>
    </location>
</feature>
<feature type="cross-link" description="Glycyl lysine isopeptide (Lys-Gly) (interchain with G-Cter in ubiquitin)" evidence="2">
    <location>
        <position position="422"/>
    </location>
</feature>
<feature type="sequence variant" description="In strain: CLIB 95, CLIB 219, CLIB 382, CLIB 388, CLIB 556, CLIB 630, K1, R12, R13, YIIc12 and YIIc17." evidence="5">
    <original>S</original>
    <variation>T</variation>
    <location>
        <position position="34"/>
    </location>
</feature>
<feature type="sequence variant" description="In strain: CLIB 95, CLIB 382, CLIB 388, CLIB 556, CLIB 630, K1, R12, R13, YIIc12 and YIIc17." evidence="5">
    <original>A</original>
    <variation>T</variation>
    <location>
        <position position="176"/>
    </location>
</feature>
<feature type="sequence variant" description="In strain: CLIB 95, CLIB 219, CLIB 382, CLIB 388, CLIB 556, CLIB 630, K1, R12, R13, YIIc12 and YIIc17." evidence="5">
    <original>D</original>
    <variation>G</variation>
    <location>
        <position position="201"/>
    </location>
</feature>
<feature type="sequence variant" description="In strain: CLIB 630 haplotype Ha2." evidence="5">
    <original>M</original>
    <variation>I</variation>
    <location>
        <position position="294"/>
    </location>
</feature>
<feature type="sequence variant" description="In strain: CLIB 388, YIIc12 haplotype Ha2 and YIIc17 haplotype Ha2." evidence="5">
    <original>K</original>
    <variation>E</variation>
    <location>
        <position position="337"/>
    </location>
</feature>
<feature type="sequence variant" description="In strain: CLIB 95, CLIB 219, CLIB 382, CLIB 388, CLIB 556, CLIB 630, K1, R12, R13, YIIc12 and YIIc17." evidence="5">
    <original>D</original>
    <variation>N</variation>
    <location>
        <position position="370"/>
    </location>
</feature>
<feature type="sequence variant" description="In strain: R12 haplotype Ha2." evidence="5">
    <original>F</original>
    <variation>L</variation>
    <location>
        <position position="394"/>
    </location>
</feature>
<proteinExistence type="evidence at protein level"/>
<name>STE2_YEASX</name>
<evidence type="ECO:0000250" key="1"/>
<evidence type="ECO:0000250" key="2">
    <source>
        <dbReference type="UniProtKB" id="D6VTK4"/>
    </source>
</evidence>
<evidence type="ECO:0000255" key="3"/>
<evidence type="ECO:0000256" key="4">
    <source>
        <dbReference type="SAM" id="MobiDB-lite"/>
    </source>
</evidence>
<evidence type="ECO:0000269" key="5">
    <source>
    </source>
</evidence>
<evidence type="ECO:0000305" key="6"/>